<protein>
    <recommendedName>
        <fullName evidence="1">Protoheme IX farnesyltransferase</fullName>
        <ecNumber evidence="1">2.5.1.141</ecNumber>
    </recommendedName>
    <alternativeName>
        <fullName evidence="1">Heme B farnesyltransferase</fullName>
    </alternativeName>
    <alternativeName>
        <fullName evidence="1">Heme O synthase</fullName>
    </alternativeName>
</protein>
<keyword id="KW-0997">Cell inner membrane</keyword>
<keyword id="KW-1003">Cell membrane</keyword>
<keyword id="KW-0350">Heme biosynthesis</keyword>
<keyword id="KW-0472">Membrane</keyword>
<keyword id="KW-1185">Reference proteome</keyword>
<keyword id="KW-0808">Transferase</keyword>
<keyword id="KW-0812">Transmembrane</keyword>
<keyword id="KW-1133">Transmembrane helix</keyword>
<dbReference type="EC" id="2.5.1.141" evidence="1"/>
<dbReference type="EMBL" id="BX908798">
    <property type="protein sequence ID" value="CAF23917.1"/>
    <property type="molecule type" value="Genomic_DNA"/>
</dbReference>
<dbReference type="RefSeq" id="WP_011175743.1">
    <property type="nucleotide sequence ID" value="NC_005861.2"/>
</dbReference>
<dbReference type="SMR" id="Q6MBY2"/>
<dbReference type="STRING" id="264201.pc1193"/>
<dbReference type="KEGG" id="pcu:PC_RS05750"/>
<dbReference type="eggNOG" id="COG0109">
    <property type="taxonomic scope" value="Bacteria"/>
</dbReference>
<dbReference type="HOGENOM" id="CLU_029631_0_0_0"/>
<dbReference type="OrthoDB" id="9814417at2"/>
<dbReference type="UniPathway" id="UPA00834">
    <property type="reaction ID" value="UER00712"/>
</dbReference>
<dbReference type="Proteomes" id="UP000000529">
    <property type="component" value="Chromosome"/>
</dbReference>
<dbReference type="GO" id="GO:0005886">
    <property type="term" value="C:plasma membrane"/>
    <property type="evidence" value="ECO:0007669"/>
    <property type="project" value="UniProtKB-SubCell"/>
</dbReference>
<dbReference type="GO" id="GO:0008495">
    <property type="term" value="F:protoheme IX farnesyltransferase activity"/>
    <property type="evidence" value="ECO:0007669"/>
    <property type="project" value="UniProtKB-UniRule"/>
</dbReference>
<dbReference type="GO" id="GO:0048034">
    <property type="term" value="P:heme O biosynthetic process"/>
    <property type="evidence" value="ECO:0007669"/>
    <property type="project" value="UniProtKB-UniRule"/>
</dbReference>
<dbReference type="CDD" id="cd13957">
    <property type="entry name" value="PT_UbiA_Cox10"/>
    <property type="match status" value="1"/>
</dbReference>
<dbReference type="Gene3D" id="1.10.357.140">
    <property type="entry name" value="UbiA prenyltransferase"/>
    <property type="match status" value="1"/>
</dbReference>
<dbReference type="HAMAP" id="MF_00154">
    <property type="entry name" value="CyoE_CtaB"/>
    <property type="match status" value="1"/>
</dbReference>
<dbReference type="InterPro" id="IPR006369">
    <property type="entry name" value="Protohaem_IX_farnesylTrfase"/>
</dbReference>
<dbReference type="InterPro" id="IPR000537">
    <property type="entry name" value="UbiA_prenyltransferase"/>
</dbReference>
<dbReference type="InterPro" id="IPR044878">
    <property type="entry name" value="UbiA_sf"/>
</dbReference>
<dbReference type="NCBIfam" id="TIGR01473">
    <property type="entry name" value="cyoE_ctaB"/>
    <property type="match status" value="1"/>
</dbReference>
<dbReference type="NCBIfam" id="NF003348">
    <property type="entry name" value="PRK04375.1-1"/>
    <property type="match status" value="1"/>
</dbReference>
<dbReference type="PANTHER" id="PTHR43448">
    <property type="entry name" value="PROTOHEME IX FARNESYLTRANSFERASE, MITOCHONDRIAL"/>
    <property type="match status" value="1"/>
</dbReference>
<dbReference type="PANTHER" id="PTHR43448:SF2">
    <property type="entry name" value="PROTOHEME IX FARNESYLTRANSFERASE, MITOCHONDRIAL"/>
    <property type="match status" value="1"/>
</dbReference>
<dbReference type="Pfam" id="PF01040">
    <property type="entry name" value="UbiA"/>
    <property type="match status" value="1"/>
</dbReference>
<proteinExistence type="inferred from homology"/>
<evidence type="ECO:0000255" key="1">
    <source>
        <dbReference type="HAMAP-Rule" id="MF_00154"/>
    </source>
</evidence>
<gene>
    <name evidence="1" type="primary">ctaB</name>
    <name type="ordered locus">pc1193</name>
</gene>
<reference key="1">
    <citation type="journal article" date="2004" name="Science">
        <title>Illuminating the evolutionary history of chlamydiae.</title>
        <authorList>
            <person name="Horn M."/>
            <person name="Collingro A."/>
            <person name="Schmitz-Esser S."/>
            <person name="Beier C.L."/>
            <person name="Purkhold U."/>
            <person name="Fartmann B."/>
            <person name="Brandt P."/>
            <person name="Nyakatura G.J."/>
            <person name="Droege M."/>
            <person name="Frishman D."/>
            <person name="Rattei T."/>
            <person name="Mewes H.-W."/>
            <person name="Wagner M."/>
        </authorList>
    </citation>
    <scope>NUCLEOTIDE SEQUENCE [LARGE SCALE GENOMIC DNA]</scope>
    <source>
        <strain>UWE25</strain>
    </source>
</reference>
<name>COXX_PARUW</name>
<organism>
    <name type="scientific">Protochlamydia amoebophila (strain UWE25)</name>
    <dbReference type="NCBI Taxonomy" id="264201"/>
    <lineage>
        <taxon>Bacteria</taxon>
        <taxon>Pseudomonadati</taxon>
        <taxon>Chlamydiota</taxon>
        <taxon>Chlamydiia</taxon>
        <taxon>Parachlamydiales</taxon>
        <taxon>Parachlamydiaceae</taxon>
        <taxon>Candidatus Protochlamydia</taxon>
    </lineage>
</organism>
<comment type="function">
    <text evidence="1">Converts heme B (protoheme IX) to heme O by substitution of the vinyl group on carbon 2 of heme B porphyrin ring with a hydroxyethyl farnesyl side group.</text>
</comment>
<comment type="catalytic activity">
    <reaction evidence="1">
        <text>heme b + (2E,6E)-farnesyl diphosphate + H2O = Fe(II)-heme o + diphosphate</text>
        <dbReference type="Rhea" id="RHEA:28070"/>
        <dbReference type="ChEBI" id="CHEBI:15377"/>
        <dbReference type="ChEBI" id="CHEBI:33019"/>
        <dbReference type="ChEBI" id="CHEBI:60344"/>
        <dbReference type="ChEBI" id="CHEBI:60530"/>
        <dbReference type="ChEBI" id="CHEBI:175763"/>
        <dbReference type="EC" id="2.5.1.141"/>
    </reaction>
</comment>
<comment type="pathway">
    <text evidence="1">Porphyrin-containing compound metabolism; heme O biosynthesis; heme O from protoheme: step 1/1.</text>
</comment>
<comment type="subcellular location">
    <subcellularLocation>
        <location evidence="1">Cell inner membrane</location>
        <topology evidence="1">Multi-pass membrane protein</topology>
    </subcellularLocation>
</comment>
<comment type="miscellaneous">
    <text evidence="1">Carbon 2 of the heme B porphyrin ring is defined according to the Fischer nomenclature.</text>
</comment>
<comment type="similarity">
    <text evidence="1">Belongs to the UbiA prenyltransferase family. Protoheme IX farnesyltransferase subfamily.</text>
</comment>
<sequence>MINYYLLLTKPGIILGNLVTVMAGFLLASKGQFQFGLFFSTILGLAFIMASGCVFNNYIDLEKDRLMKRTQNRPLVIGVIFEKQAIVFGLALAIVGAIILYFYTNLLTLVIAELGFIIYVFFYSIWKSRTVYGTAIGSLAGAVPPLVGYCAVSNQLDLGAFILFAMMVFWQMPHFFSIAIYRLQDYSAANIPVLPLKKGIQITKIRILLYIIIFTLTSSLLTFFHFTGSLYLILTIGLGLTWLLMGLRGLKTSNDQQWAQQMFRFSLVIISVLSLTIPFDLVN</sequence>
<feature type="chain" id="PRO_0000327124" description="Protoheme IX farnesyltransferase">
    <location>
        <begin position="1"/>
        <end position="283"/>
    </location>
</feature>
<feature type="transmembrane region" description="Helical" evidence="1">
    <location>
        <begin position="6"/>
        <end position="26"/>
    </location>
</feature>
<feature type="transmembrane region" description="Helical" evidence="1">
    <location>
        <begin position="35"/>
        <end position="55"/>
    </location>
</feature>
<feature type="transmembrane region" description="Helical" evidence="1">
    <location>
        <begin position="85"/>
        <end position="105"/>
    </location>
</feature>
<feature type="transmembrane region" description="Helical" evidence="1">
    <location>
        <begin position="106"/>
        <end position="126"/>
    </location>
</feature>
<feature type="transmembrane region" description="Helical" evidence="1">
    <location>
        <begin position="131"/>
        <end position="151"/>
    </location>
</feature>
<feature type="transmembrane region" description="Helical" evidence="1">
    <location>
        <begin position="160"/>
        <end position="180"/>
    </location>
</feature>
<feature type="transmembrane region" description="Helical" evidence="1">
    <location>
        <begin position="207"/>
        <end position="227"/>
    </location>
</feature>
<feature type="transmembrane region" description="Helical" evidence="1">
    <location>
        <begin position="230"/>
        <end position="250"/>
    </location>
</feature>
<feature type="transmembrane region" description="Helical" evidence="1">
    <location>
        <begin position="262"/>
        <end position="282"/>
    </location>
</feature>
<accession>Q6MBY2</accession>